<comment type="function">
    <text evidence="1">Attaches the virus to host cellular receptor, inducing endocytosis of the virion. In the endosome, the acidic pH induces conformational changes in the glycoprotein trimer, which trigger fusion between virus and cell membrane (By similarity).</text>
</comment>
<comment type="subunit">
    <text evidence="1">Homotrimer. Interacts with matrix protein (By similarity).</text>
</comment>
<comment type="subcellular location">
    <subcellularLocation>
        <location evidence="1">Virion membrane</location>
        <topology evidence="1">Single-pass type I membrane protein</topology>
    </subcellularLocation>
</comment>
<comment type="PTM">
    <text evidence="1">Glycosylated by host. Glycosylation is crucial for glycoprotein export at the cell surface (By similarity).</text>
</comment>
<comment type="similarity">
    <text evidence="3">Belongs to the novirhabdovirus glycoprotein family.</text>
</comment>
<organismHost>
    <name type="scientific">Gobiosoma bosc</name>
    <name type="common">Naked goby</name>
    <name type="synonym">Gobius bosc</name>
    <dbReference type="NCBI Taxonomy" id="203314"/>
</organismHost>
<feature type="signal peptide" evidence="2">
    <location>
        <begin position="1"/>
        <end position="25"/>
    </location>
</feature>
<feature type="chain" id="PRO_0000299232" description="Glycoprotein">
    <location>
        <begin position="26"/>
        <end position="512"/>
    </location>
</feature>
<feature type="topological domain" description="Virion surface" evidence="2">
    <location>
        <begin position="26"/>
        <end position="463"/>
    </location>
</feature>
<feature type="transmembrane region" description="Helical" evidence="2">
    <location>
        <begin position="464"/>
        <end position="486"/>
    </location>
</feature>
<feature type="topological domain" description="Intravirion" evidence="2">
    <location>
        <begin position="487"/>
        <end position="512"/>
    </location>
</feature>
<proteinExistence type="inferred from homology"/>
<accession>Q9QJT6</accession>
<keyword id="KW-0325">Glycoprotein</keyword>
<keyword id="KW-0945">Host-virus interaction</keyword>
<keyword id="KW-0472">Membrane</keyword>
<keyword id="KW-1185">Reference proteome</keyword>
<keyword id="KW-0732">Signal</keyword>
<keyword id="KW-0812">Transmembrane</keyword>
<keyword id="KW-1133">Transmembrane helix</keyword>
<keyword id="KW-1161">Viral attachment to host cell</keyword>
<keyword id="KW-0261">Viral envelope protein</keyword>
<keyword id="KW-0946">Virion</keyword>
<keyword id="KW-1160">Virus entry into host cell</keyword>
<evidence type="ECO:0000250" key="1"/>
<evidence type="ECO:0000255" key="2"/>
<evidence type="ECO:0000305" key="3"/>
<dbReference type="EMBL" id="AF147498">
    <property type="protein sequence ID" value="AAD56769.1"/>
    <property type="molecule type" value="Genomic_RNA"/>
</dbReference>
<dbReference type="RefSeq" id="NP_050583.1">
    <property type="nucleotide sequence ID" value="NC_000903.1"/>
</dbReference>
<dbReference type="SMR" id="Q9QJT6"/>
<dbReference type="GeneID" id="1457772"/>
<dbReference type="KEGG" id="vg:1457772"/>
<dbReference type="OrthoDB" id="21147at10239"/>
<dbReference type="Proteomes" id="UP000007219">
    <property type="component" value="Genome"/>
</dbReference>
<dbReference type="GO" id="GO:0016020">
    <property type="term" value="C:membrane"/>
    <property type="evidence" value="ECO:0007669"/>
    <property type="project" value="UniProtKB-KW"/>
</dbReference>
<dbReference type="GO" id="GO:0019031">
    <property type="term" value="C:viral envelope"/>
    <property type="evidence" value="ECO:0007669"/>
    <property type="project" value="UniProtKB-KW"/>
</dbReference>
<dbReference type="GO" id="GO:0055036">
    <property type="term" value="C:virion membrane"/>
    <property type="evidence" value="ECO:0007669"/>
    <property type="project" value="UniProtKB-SubCell"/>
</dbReference>
<dbReference type="GO" id="GO:0046718">
    <property type="term" value="P:symbiont entry into host cell"/>
    <property type="evidence" value="ECO:0007669"/>
    <property type="project" value="UniProtKB-KW"/>
</dbReference>
<dbReference type="GO" id="GO:0019062">
    <property type="term" value="P:virion attachment to host cell"/>
    <property type="evidence" value="ECO:0007669"/>
    <property type="project" value="UniProtKB-KW"/>
</dbReference>
<dbReference type="InterPro" id="IPR055447">
    <property type="entry name" value="Rhabdo_glycop_CD"/>
</dbReference>
<dbReference type="InterPro" id="IPR001903">
    <property type="entry name" value="Rhabdo_glycop_FD"/>
</dbReference>
<dbReference type="InterPro" id="IPR002417">
    <property type="entry name" value="Spike_prot"/>
</dbReference>
<dbReference type="Pfam" id="PF24833">
    <property type="entry name" value="Rhabdo_glycop_CD"/>
    <property type="match status" value="1"/>
</dbReference>
<dbReference type="Pfam" id="PF00974">
    <property type="entry name" value="Rhabdo_glycop_FD"/>
    <property type="match status" value="1"/>
</dbReference>
<dbReference type="PRINTS" id="PR00796">
    <property type="entry name" value="SPIKEPROTEIN"/>
</dbReference>
<dbReference type="SUPFAM" id="SSF161008">
    <property type="entry name" value="Viral glycoprotein ectodomain-like"/>
    <property type="match status" value="1"/>
</dbReference>
<gene>
    <name type="primary">G</name>
</gene>
<protein>
    <recommendedName>
        <fullName>Glycoprotein</fullName>
    </recommendedName>
</protein>
<reference key="1">
    <citation type="submission" date="1999-05" db="EMBL/GenBank/DDBJ databases">
        <title>The complete genomic sequence of snakehead rhabdovirus.</title>
        <authorList>
            <person name="Johnson M.C."/>
            <person name="Bell R.H."/>
            <person name="Leong J.C."/>
        </authorList>
    </citation>
    <scope>NUCLEOTIDE SEQUENCE [GENOMIC RNA]</scope>
</reference>
<sequence length="512" mass="58079">MTLPNMKPKRIVLFLVFLNAWVSNAQVTHKPRPDSIVEYSEEWENPIYTTPSHCFEDTFAPVKPEKLRCPHIFDDQNLGLTASKAKILHMDLKPEDTHFEAKGRLLHKVTYQVLCSTGFFGGRTVTRKVLETPMGDNEAQAYKAVDREFPYFPEPLCFWLRDNVAAERVFHFSTPKTVTVDLYSRKYISPDFVGGQCAKSPCPTHWPNVYWVGETQSPECPSIDTEGGHIFTKKDTHRITKAVVHGHHPWGLTKACQIQFCNEQWIRTDLGDLIRIEPNDGTSSLTLPKCQDNVVQMRGNLDDFSYLNHAIVNMAQRSECLEAHSSIVAQQKVSPYLLSKFRPPHPGLGKAHYLQNNTIMRGDCIYEGVAEISENRTTYRNLKGEWKKWSLSRGGEGYDGMTVGTKIVIPDLEKYQSIYDNGMFIPKLLGEVPHPSIVITYNQTDSIETGIFTDGKLLNMGVNWTLWPSLSGISLFTVASLILIWYCCCRVTPQALNYSIPMHTITSRGVEI</sequence>
<name>GLYCO_SHRV</name>
<organism>
    <name type="scientific">Snakehead rhabdovirus</name>
    <name type="common">SHRV</name>
    <dbReference type="NCBI Taxonomy" id="103603"/>
    <lineage>
        <taxon>Viruses</taxon>
        <taxon>Riboviria</taxon>
        <taxon>Orthornavirae</taxon>
        <taxon>Negarnaviricota</taxon>
        <taxon>Haploviricotina</taxon>
        <taxon>Monjiviricetes</taxon>
        <taxon>Mononegavirales</taxon>
        <taxon>Rhabdoviridae</taxon>
        <taxon>Gammarhabdovirinae</taxon>
        <taxon>Novirhabdovirus</taxon>
        <taxon>Novirhabdovirus snakehead</taxon>
    </lineage>
</organism>